<sequence length="466" mass="52598">MSLSLWQQCLARLQDELPATEFSMWIRPLQAELSDNTLALYAPNRFVLDWVRDKYLNNINGLLNTFCGADAPQLRFEVGTKPVTQTLKTPVHNVVAPAQTTTAQPQRVAPAARSGWDNVPAPAEPTYRSNVNVKHTFDNFVEGKSNQLARAAARQVADNPGGAYNPLFLYGGTGLGKTHLLHAVGNGIMARKPNAKVVYMHSERFVQDMVKALQNNAIEEFKRYYRSVDALLIDDIQFFANKERSQEEFFHTFNALLEGNQQIILTSDRYPKEINGVEDRLKSRFGWGLTVAIEPPELETRVAILMKKADENDIRLPGEVAFFIAKRLRSNVRELEGALNRVIANANFTGRAITIDFVREALRDLLALQEKLVTIDNIQKTVAEYYKIKIADLLSKRRSRSVARPRQMAMALAKELTNHSLPEIGDAFGGRDHTTVLHACRKIEQLREESHDIKEDFSNLIRTLSS</sequence>
<reference key="1">
    <citation type="journal article" date="1987" name="J. Bacteriol.">
        <title>Comparison of dnaA nucleotide sequences of Escherichia coli, Salmonella typhimurium, and Serratia marcescens.</title>
        <authorList>
            <person name="Skovgaard O."/>
            <person name="Hansen F.G."/>
        </authorList>
    </citation>
    <scope>NUCLEOTIDE SEQUENCE [GENOMIC DNA]</scope>
</reference>
<reference key="2">
    <citation type="journal article" date="2001" name="Nature">
        <title>Complete genome sequence of Salmonella enterica serovar Typhimurium LT2.</title>
        <authorList>
            <person name="McClelland M."/>
            <person name="Sanderson K.E."/>
            <person name="Spieth J."/>
            <person name="Clifton S.W."/>
            <person name="Latreille P."/>
            <person name="Courtney L."/>
            <person name="Porwollik S."/>
            <person name="Ali J."/>
            <person name="Dante M."/>
            <person name="Du F."/>
            <person name="Hou S."/>
            <person name="Layman D."/>
            <person name="Leonard S."/>
            <person name="Nguyen C."/>
            <person name="Scott K."/>
            <person name="Holmes A."/>
            <person name="Grewal N."/>
            <person name="Mulvaney E."/>
            <person name="Ryan E."/>
            <person name="Sun H."/>
            <person name="Florea L."/>
            <person name="Miller W."/>
            <person name="Stoneking T."/>
            <person name="Nhan M."/>
            <person name="Waterston R."/>
            <person name="Wilson R.K."/>
        </authorList>
    </citation>
    <scope>NUCLEOTIDE SEQUENCE [LARGE SCALE GENOMIC DNA]</scope>
    <source>
        <strain>LT2 / SGSC1412 / ATCC 700720</strain>
    </source>
</reference>
<feature type="chain" id="PRO_0000114252" description="Chromosomal replication initiator protein DnaA">
    <location>
        <begin position="1"/>
        <end position="466"/>
    </location>
</feature>
<feature type="region of interest" description="Domain I, interacts with DnaA modulators" evidence="1">
    <location>
        <begin position="1"/>
        <end position="86"/>
    </location>
</feature>
<feature type="region of interest" description="Domain II" evidence="1">
    <location>
        <begin position="86"/>
        <end position="129"/>
    </location>
</feature>
<feature type="region of interest" description="Domain III, AAA+ region" evidence="1">
    <location>
        <begin position="130"/>
        <end position="346"/>
    </location>
</feature>
<feature type="region of interest" description="Domain IV, binds dsDNA" evidence="1">
    <location>
        <begin position="347"/>
        <end position="466"/>
    </location>
</feature>
<feature type="binding site" evidence="1">
    <location>
        <position position="174"/>
    </location>
    <ligand>
        <name>ATP</name>
        <dbReference type="ChEBI" id="CHEBI:30616"/>
    </ligand>
</feature>
<feature type="binding site" evidence="1">
    <location>
        <position position="176"/>
    </location>
    <ligand>
        <name>ATP</name>
        <dbReference type="ChEBI" id="CHEBI:30616"/>
    </ligand>
</feature>
<feature type="binding site" evidence="1">
    <location>
        <position position="177"/>
    </location>
    <ligand>
        <name>ATP</name>
        <dbReference type="ChEBI" id="CHEBI:30616"/>
    </ligand>
</feature>
<feature type="binding site" evidence="1">
    <location>
        <position position="178"/>
    </location>
    <ligand>
        <name>ATP</name>
        <dbReference type="ChEBI" id="CHEBI:30616"/>
    </ligand>
</feature>
<feature type="sequence conflict" description="In Ref. 1; AAA02815." evidence="2" ref="1">
    <original>A</original>
    <variation>T</variation>
    <location>
        <position position="103"/>
    </location>
</feature>
<comment type="function">
    <text evidence="1">Plays an essential role in the initiation and regulation of chromosomal replication. ATP-DnaA binds to the origin of replication (oriC) to initiate formation of the DNA replication initiation complex once per cell cycle. Binds the DnaA box (a 9 base pair repeat at the origin) and separates the double-stranded (ds)DNA. Forms a right-handed helical filament on oriC DNA; dsDNA binds to the exterior of the filament while single-stranded (ss)DNA is stabiized in the filament's interior. The ATP-DnaA-oriC complex binds and stabilizes one strand of the AT-rich DNA unwinding element (DUE), permitting loading of DNA polymerase. After initiation quickly degrades to an ADP-DnaA complex that is not apt for DNA replication. Binds acidic phospholipids.</text>
</comment>
<comment type="subunit">
    <text evidence="1">Oligomerizes as a right-handed, spiral filament on DNA at oriC.</text>
</comment>
<comment type="subcellular location">
    <subcellularLocation>
        <location evidence="1">Cytoplasm</location>
    </subcellularLocation>
</comment>
<comment type="domain">
    <text evidence="1">Domain I is involved in oligomerization and binding regulators, domain II is flexibile and of varying length in different bacteria, domain III forms the AAA+ region, while domain IV binds dsDNA.</text>
</comment>
<comment type="similarity">
    <text evidence="1">Belongs to the DnaA family.</text>
</comment>
<proteinExistence type="inferred from homology"/>
<keyword id="KW-0067">ATP-binding</keyword>
<keyword id="KW-0963">Cytoplasm</keyword>
<keyword id="KW-0235">DNA replication</keyword>
<keyword id="KW-0238">DNA-binding</keyword>
<keyword id="KW-0446">Lipid-binding</keyword>
<keyword id="KW-0547">Nucleotide-binding</keyword>
<keyword id="KW-1185">Reference proteome</keyword>
<accession>P35891</accession>
<name>DNAA_SALTY</name>
<gene>
    <name evidence="1" type="primary">dnaA</name>
    <name type="ordered locus">STM3838</name>
</gene>
<evidence type="ECO:0000255" key="1">
    <source>
        <dbReference type="HAMAP-Rule" id="MF_00377"/>
    </source>
</evidence>
<evidence type="ECO:0000305" key="2"/>
<dbReference type="EMBL" id="M17352">
    <property type="protein sequence ID" value="AAA02815.1"/>
    <property type="molecule type" value="Unassigned_DNA"/>
</dbReference>
<dbReference type="EMBL" id="AE006468">
    <property type="protein sequence ID" value="AAL22697.1"/>
    <property type="molecule type" value="Genomic_DNA"/>
</dbReference>
<dbReference type="RefSeq" id="NP_462738.1">
    <property type="nucleotide sequence ID" value="NC_003197.2"/>
</dbReference>
<dbReference type="RefSeq" id="WP_000059093.1">
    <property type="nucleotide sequence ID" value="NC_003197.2"/>
</dbReference>
<dbReference type="SMR" id="P35891"/>
<dbReference type="STRING" id="99287.STM3838"/>
<dbReference type="PaxDb" id="99287-STM3838"/>
<dbReference type="GeneID" id="1255365"/>
<dbReference type="KEGG" id="stm:STM3838"/>
<dbReference type="PATRIC" id="fig|99287.12.peg.4065"/>
<dbReference type="HOGENOM" id="CLU_026910_0_1_6"/>
<dbReference type="OMA" id="DFIHFYQ"/>
<dbReference type="PhylomeDB" id="P35891"/>
<dbReference type="BioCyc" id="SENT99287:STM3838-MONOMER"/>
<dbReference type="Proteomes" id="UP000001014">
    <property type="component" value="Chromosome"/>
</dbReference>
<dbReference type="GO" id="GO:0005737">
    <property type="term" value="C:cytoplasm"/>
    <property type="evidence" value="ECO:0007669"/>
    <property type="project" value="UniProtKB-SubCell"/>
</dbReference>
<dbReference type="GO" id="GO:0005886">
    <property type="term" value="C:plasma membrane"/>
    <property type="evidence" value="ECO:0000318"/>
    <property type="project" value="GO_Central"/>
</dbReference>
<dbReference type="GO" id="GO:0005524">
    <property type="term" value="F:ATP binding"/>
    <property type="evidence" value="ECO:0007669"/>
    <property type="project" value="UniProtKB-UniRule"/>
</dbReference>
<dbReference type="GO" id="GO:0016887">
    <property type="term" value="F:ATP hydrolysis activity"/>
    <property type="evidence" value="ECO:0007669"/>
    <property type="project" value="InterPro"/>
</dbReference>
<dbReference type="GO" id="GO:0003688">
    <property type="term" value="F:DNA replication origin binding"/>
    <property type="evidence" value="ECO:0000318"/>
    <property type="project" value="GO_Central"/>
</dbReference>
<dbReference type="GO" id="GO:0008289">
    <property type="term" value="F:lipid binding"/>
    <property type="evidence" value="ECO:0007669"/>
    <property type="project" value="UniProtKB-KW"/>
</dbReference>
<dbReference type="GO" id="GO:0006260">
    <property type="term" value="P:DNA replication"/>
    <property type="evidence" value="ECO:0000318"/>
    <property type="project" value="GO_Central"/>
</dbReference>
<dbReference type="GO" id="GO:0006270">
    <property type="term" value="P:DNA replication initiation"/>
    <property type="evidence" value="ECO:0000318"/>
    <property type="project" value="GO_Central"/>
</dbReference>
<dbReference type="GO" id="GO:0006275">
    <property type="term" value="P:regulation of DNA replication"/>
    <property type="evidence" value="ECO:0007669"/>
    <property type="project" value="UniProtKB-UniRule"/>
</dbReference>
<dbReference type="CDD" id="cd00009">
    <property type="entry name" value="AAA"/>
    <property type="match status" value="1"/>
</dbReference>
<dbReference type="CDD" id="cd06571">
    <property type="entry name" value="Bac_DnaA_C"/>
    <property type="match status" value="1"/>
</dbReference>
<dbReference type="FunFam" id="1.10.1750.10:FF:000001">
    <property type="entry name" value="Chromosomal replication initiator protein DnaA"/>
    <property type="match status" value="1"/>
</dbReference>
<dbReference type="FunFam" id="1.10.8.60:FF:000003">
    <property type="entry name" value="Chromosomal replication initiator protein DnaA"/>
    <property type="match status" value="1"/>
</dbReference>
<dbReference type="FunFam" id="3.30.300.180:FF:000001">
    <property type="entry name" value="Chromosomal replication initiator protein DnaA"/>
    <property type="match status" value="1"/>
</dbReference>
<dbReference type="FunFam" id="3.40.50.300:FF:000103">
    <property type="entry name" value="Chromosomal replication initiator protein DnaA"/>
    <property type="match status" value="1"/>
</dbReference>
<dbReference type="Gene3D" id="1.10.1750.10">
    <property type="match status" value="1"/>
</dbReference>
<dbReference type="Gene3D" id="1.10.8.60">
    <property type="match status" value="1"/>
</dbReference>
<dbReference type="Gene3D" id="3.30.300.180">
    <property type="match status" value="1"/>
</dbReference>
<dbReference type="Gene3D" id="3.40.50.300">
    <property type="entry name" value="P-loop containing nucleotide triphosphate hydrolases"/>
    <property type="match status" value="1"/>
</dbReference>
<dbReference type="HAMAP" id="MF_00377">
    <property type="entry name" value="DnaA_bact"/>
    <property type="match status" value="1"/>
</dbReference>
<dbReference type="InterPro" id="IPR003593">
    <property type="entry name" value="AAA+_ATPase"/>
</dbReference>
<dbReference type="InterPro" id="IPR001957">
    <property type="entry name" value="Chromosome_initiator_DnaA"/>
</dbReference>
<dbReference type="InterPro" id="IPR020591">
    <property type="entry name" value="Chromosome_initiator_DnaA-like"/>
</dbReference>
<dbReference type="InterPro" id="IPR018312">
    <property type="entry name" value="Chromosome_initiator_DnaA_CS"/>
</dbReference>
<dbReference type="InterPro" id="IPR013159">
    <property type="entry name" value="DnaA_C"/>
</dbReference>
<dbReference type="InterPro" id="IPR013317">
    <property type="entry name" value="DnaA_dom"/>
</dbReference>
<dbReference type="InterPro" id="IPR024633">
    <property type="entry name" value="DnaA_N_dom"/>
</dbReference>
<dbReference type="InterPro" id="IPR038454">
    <property type="entry name" value="DnaA_N_sf"/>
</dbReference>
<dbReference type="InterPro" id="IPR027417">
    <property type="entry name" value="P-loop_NTPase"/>
</dbReference>
<dbReference type="InterPro" id="IPR010921">
    <property type="entry name" value="Trp_repressor/repl_initiator"/>
</dbReference>
<dbReference type="NCBIfam" id="TIGR00362">
    <property type="entry name" value="DnaA"/>
    <property type="match status" value="1"/>
</dbReference>
<dbReference type="PANTHER" id="PTHR30050">
    <property type="entry name" value="CHROMOSOMAL REPLICATION INITIATOR PROTEIN DNAA"/>
    <property type="match status" value="1"/>
</dbReference>
<dbReference type="PANTHER" id="PTHR30050:SF2">
    <property type="entry name" value="CHROMOSOMAL REPLICATION INITIATOR PROTEIN DNAA"/>
    <property type="match status" value="1"/>
</dbReference>
<dbReference type="Pfam" id="PF00308">
    <property type="entry name" value="Bac_DnaA"/>
    <property type="match status" value="1"/>
</dbReference>
<dbReference type="Pfam" id="PF08299">
    <property type="entry name" value="Bac_DnaA_C"/>
    <property type="match status" value="1"/>
</dbReference>
<dbReference type="Pfam" id="PF11638">
    <property type="entry name" value="DnaA_N"/>
    <property type="match status" value="1"/>
</dbReference>
<dbReference type="PRINTS" id="PR00051">
    <property type="entry name" value="DNAA"/>
</dbReference>
<dbReference type="SMART" id="SM00382">
    <property type="entry name" value="AAA"/>
    <property type="match status" value="1"/>
</dbReference>
<dbReference type="SMART" id="SM00760">
    <property type="entry name" value="Bac_DnaA_C"/>
    <property type="match status" value="1"/>
</dbReference>
<dbReference type="SUPFAM" id="SSF52540">
    <property type="entry name" value="P-loop containing nucleoside triphosphate hydrolases"/>
    <property type="match status" value="1"/>
</dbReference>
<dbReference type="SUPFAM" id="SSF48295">
    <property type="entry name" value="TrpR-like"/>
    <property type="match status" value="1"/>
</dbReference>
<dbReference type="PROSITE" id="PS01008">
    <property type="entry name" value="DNAA"/>
    <property type="match status" value="1"/>
</dbReference>
<organism>
    <name type="scientific">Salmonella typhimurium (strain LT2 / SGSC1412 / ATCC 700720)</name>
    <dbReference type="NCBI Taxonomy" id="99287"/>
    <lineage>
        <taxon>Bacteria</taxon>
        <taxon>Pseudomonadati</taxon>
        <taxon>Pseudomonadota</taxon>
        <taxon>Gammaproteobacteria</taxon>
        <taxon>Enterobacterales</taxon>
        <taxon>Enterobacteriaceae</taxon>
        <taxon>Salmonella</taxon>
    </lineage>
</organism>
<protein>
    <recommendedName>
        <fullName evidence="1">Chromosomal replication initiator protein DnaA</fullName>
    </recommendedName>
</protein>